<keyword id="KW-0963">Cytoplasm</keyword>
<keyword id="KW-0808">Transferase</keyword>
<reference key="1">
    <citation type="submission" date="2000-05" db="EMBL/GenBank/DDBJ databases">
        <title>Identification of mRNAs expressed in underground adventitious buds of Euphorbia esula (leafy spurge).</title>
        <authorList>
            <person name="Anderson J.V."/>
            <person name="Horvath D.P."/>
        </authorList>
    </citation>
    <scope>NUCLEOTIDE SEQUENCE [MRNA]</scope>
    <source>
        <tissue>Underground adventitious buds</tissue>
    </source>
</reference>
<name>GSTZ_EUPES</name>
<feature type="chain" id="PRO_0000186033" description="Glutathione S-transferase zeta class">
    <location>
        <begin position="1"/>
        <end position="225"/>
    </location>
</feature>
<feature type="domain" description="GST N-terminal">
    <location>
        <begin position="10"/>
        <end position="91"/>
    </location>
</feature>
<feature type="domain" description="GST C-terminal">
    <location>
        <begin position="96"/>
        <end position="221"/>
    </location>
</feature>
<feature type="binding site" evidence="1">
    <location>
        <begin position="20"/>
        <end position="25"/>
    </location>
    <ligand>
        <name>glutathione</name>
        <dbReference type="ChEBI" id="CHEBI:57925"/>
    </ligand>
</feature>
<feature type="binding site" evidence="1">
    <location>
        <position position="49"/>
    </location>
    <ligand>
        <name>glutathione</name>
        <dbReference type="ChEBI" id="CHEBI:57925"/>
    </ligand>
</feature>
<feature type="binding site" evidence="1">
    <location>
        <position position="63"/>
    </location>
    <ligand>
        <name>glutathione</name>
        <dbReference type="ChEBI" id="CHEBI:57925"/>
    </ligand>
</feature>
<feature type="binding site" evidence="1">
    <location>
        <begin position="75"/>
        <end position="76"/>
    </location>
    <ligand>
        <name>glutathione</name>
        <dbReference type="ChEBI" id="CHEBI:57925"/>
    </ligand>
</feature>
<feature type="binding site" evidence="1">
    <location>
        <position position="115"/>
    </location>
    <ligand>
        <name>glutathione</name>
        <dbReference type="ChEBI" id="CHEBI:57925"/>
    </ligand>
</feature>
<feature type="binding site" evidence="1">
    <location>
        <begin position="119"/>
        <end position="121"/>
    </location>
    <ligand>
        <name>glutathione</name>
        <dbReference type="ChEBI" id="CHEBI:57925"/>
    </ligand>
</feature>
<protein>
    <recommendedName>
        <fullName>Glutathione S-transferase zeta class</fullName>
        <ecNumber>2.5.1.18</ecNumber>
    </recommendedName>
</protein>
<dbReference type="EC" id="2.5.1.18"/>
<dbReference type="EMBL" id="AF263737">
    <property type="protein sequence ID" value="AAF72197.1"/>
    <property type="molecule type" value="mRNA"/>
</dbReference>
<dbReference type="SMR" id="P57108"/>
<dbReference type="GO" id="GO:0005737">
    <property type="term" value="C:cytoplasm"/>
    <property type="evidence" value="ECO:0007669"/>
    <property type="project" value="UniProtKB-SubCell"/>
</dbReference>
<dbReference type="GO" id="GO:0004364">
    <property type="term" value="F:glutathione transferase activity"/>
    <property type="evidence" value="ECO:0007669"/>
    <property type="project" value="UniProtKB-EC"/>
</dbReference>
<dbReference type="GO" id="GO:0016034">
    <property type="term" value="F:maleylacetoacetate isomerase activity"/>
    <property type="evidence" value="ECO:0007669"/>
    <property type="project" value="TreeGrafter"/>
</dbReference>
<dbReference type="GO" id="GO:0006749">
    <property type="term" value="P:glutathione metabolic process"/>
    <property type="evidence" value="ECO:0007669"/>
    <property type="project" value="TreeGrafter"/>
</dbReference>
<dbReference type="GO" id="GO:0006559">
    <property type="term" value="P:L-phenylalanine catabolic process"/>
    <property type="evidence" value="ECO:0007669"/>
    <property type="project" value="TreeGrafter"/>
</dbReference>
<dbReference type="CDD" id="cd03191">
    <property type="entry name" value="GST_C_Zeta"/>
    <property type="match status" value="1"/>
</dbReference>
<dbReference type="CDD" id="cd03042">
    <property type="entry name" value="GST_N_Zeta"/>
    <property type="match status" value="1"/>
</dbReference>
<dbReference type="FunFam" id="3.40.30.10:FF:000100">
    <property type="entry name" value="Glutathione S-transferase Z1"/>
    <property type="match status" value="1"/>
</dbReference>
<dbReference type="FunFam" id="1.20.1050.10:FF:000017">
    <property type="entry name" value="Maleylacetoacetate isomerase"/>
    <property type="match status" value="1"/>
</dbReference>
<dbReference type="Gene3D" id="1.20.1050.10">
    <property type="match status" value="1"/>
</dbReference>
<dbReference type="Gene3D" id="3.40.30.10">
    <property type="entry name" value="Glutaredoxin"/>
    <property type="match status" value="1"/>
</dbReference>
<dbReference type="InterPro" id="IPR010987">
    <property type="entry name" value="Glutathione-S-Trfase_C-like"/>
</dbReference>
<dbReference type="InterPro" id="IPR036282">
    <property type="entry name" value="Glutathione-S-Trfase_C_sf"/>
</dbReference>
<dbReference type="InterPro" id="IPR040079">
    <property type="entry name" value="Glutathione_S-Trfase"/>
</dbReference>
<dbReference type="InterPro" id="IPR004045">
    <property type="entry name" value="Glutathione_S-Trfase_N"/>
</dbReference>
<dbReference type="InterPro" id="IPR004046">
    <property type="entry name" value="GST_C"/>
</dbReference>
<dbReference type="InterPro" id="IPR005955">
    <property type="entry name" value="GST_Zeta"/>
</dbReference>
<dbReference type="InterPro" id="IPR034330">
    <property type="entry name" value="GST_Zeta_C"/>
</dbReference>
<dbReference type="InterPro" id="IPR034333">
    <property type="entry name" value="GST_Zeta_N"/>
</dbReference>
<dbReference type="InterPro" id="IPR036249">
    <property type="entry name" value="Thioredoxin-like_sf"/>
</dbReference>
<dbReference type="NCBIfam" id="TIGR01262">
    <property type="entry name" value="maiA"/>
    <property type="match status" value="1"/>
</dbReference>
<dbReference type="PANTHER" id="PTHR42673">
    <property type="entry name" value="MALEYLACETOACETATE ISOMERASE"/>
    <property type="match status" value="1"/>
</dbReference>
<dbReference type="PANTHER" id="PTHR42673:SF4">
    <property type="entry name" value="MALEYLACETOACETATE ISOMERASE"/>
    <property type="match status" value="1"/>
</dbReference>
<dbReference type="Pfam" id="PF14497">
    <property type="entry name" value="GST_C_3"/>
    <property type="match status" value="1"/>
</dbReference>
<dbReference type="Pfam" id="PF02798">
    <property type="entry name" value="GST_N"/>
    <property type="match status" value="1"/>
</dbReference>
<dbReference type="SFLD" id="SFLDS00019">
    <property type="entry name" value="Glutathione_Transferase_(cytos"/>
    <property type="match status" value="1"/>
</dbReference>
<dbReference type="SFLD" id="SFLDG00358">
    <property type="entry name" value="Main_(cytGST)"/>
    <property type="match status" value="1"/>
</dbReference>
<dbReference type="SUPFAM" id="SSF47616">
    <property type="entry name" value="GST C-terminal domain-like"/>
    <property type="match status" value="1"/>
</dbReference>
<dbReference type="SUPFAM" id="SSF52833">
    <property type="entry name" value="Thioredoxin-like"/>
    <property type="match status" value="1"/>
</dbReference>
<dbReference type="PROSITE" id="PS50405">
    <property type="entry name" value="GST_CTER"/>
    <property type="match status" value="1"/>
</dbReference>
<dbReference type="PROSITE" id="PS50404">
    <property type="entry name" value="GST_NTER"/>
    <property type="match status" value="1"/>
</dbReference>
<accession>P57108</accession>
<accession>Q9M4Q6</accession>
<comment type="catalytic activity">
    <reaction>
        <text>RX + glutathione = an S-substituted glutathione + a halide anion + H(+)</text>
        <dbReference type="Rhea" id="RHEA:16437"/>
        <dbReference type="ChEBI" id="CHEBI:15378"/>
        <dbReference type="ChEBI" id="CHEBI:16042"/>
        <dbReference type="ChEBI" id="CHEBI:17792"/>
        <dbReference type="ChEBI" id="CHEBI:57925"/>
        <dbReference type="ChEBI" id="CHEBI:90779"/>
        <dbReference type="EC" id="2.5.1.18"/>
    </reaction>
</comment>
<comment type="subcellular location">
    <subcellularLocation>
        <location evidence="1">Cytoplasm</location>
    </subcellularLocation>
</comment>
<comment type="similarity">
    <text evidence="2">Belongs to the GST superfamily. Zeta family.</text>
</comment>
<sequence>MASVEQPNKPKLKLYSYFRSSCSFRVRIALNLKGLDYEYVPVNLLKGEQFTPEFLKINPIGYVPALVDGEDVISDSFAILMYLEEKYPEHPILPADIHKKAINYQAANIVSSSIQPLQNLAVLNFIGEKVSPDEKVPWVQRHISKGFAALEKLLQGHAGRFATGDEVYLADLFLEPQIHAAITRFNVDMTQFPLLLRLHEAYSQLPEFQNAMPDKQPDSTSPTAS</sequence>
<organism>
    <name type="scientific">Euphorbia esula</name>
    <name type="common">Leafy spurge</name>
    <dbReference type="NCBI Taxonomy" id="3993"/>
    <lineage>
        <taxon>Eukaryota</taxon>
        <taxon>Viridiplantae</taxon>
        <taxon>Streptophyta</taxon>
        <taxon>Embryophyta</taxon>
        <taxon>Tracheophyta</taxon>
        <taxon>Spermatophyta</taxon>
        <taxon>Magnoliopsida</taxon>
        <taxon>eudicotyledons</taxon>
        <taxon>Gunneridae</taxon>
        <taxon>Pentapetalae</taxon>
        <taxon>rosids</taxon>
        <taxon>fabids</taxon>
        <taxon>Malpighiales</taxon>
        <taxon>Euphorbiaceae</taxon>
        <taxon>Euphorbioideae</taxon>
        <taxon>Euphorbieae</taxon>
        <taxon>Euphorbia</taxon>
        <taxon>Euphorbia subgen. Esula</taxon>
        <taxon>Euphorbia sect. Esula</taxon>
    </lineage>
</organism>
<proteinExistence type="evidence at transcript level"/>
<evidence type="ECO:0000250" key="1"/>
<evidence type="ECO:0000305" key="2"/>